<sequence>MSANMHIFENPSALAEALADDVGARLAAAIAARGTASLAVSGGSTPKAFFRSLSRRELDWSKVTVTLVDERFVPPENDRSNHRLVADNLLKDGAAEARFVPLYQAAETAEAAAAIASGRTASLGAPLDVVVLGMGTDGHTASFFPGGTRLEEALDPTTPRGVITMEAEGAGEPRLTFTFSSLQDAGYLVLHIEGSGKKEVLAQAEASGDEAEMPIRAMLRRAASPLQIYWAP</sequence>
<name>6PGL_RHIME</name>
<evidence type="ECO:0000305" key="1"/>
<accession>Q9Z3S1</accession>
<reference key="1">
    <citation type="journal article" date="1999" name="J. Bacteriol.">
        <title>A novel Sinorhizobium meliloti operon encodes an alpha-glucosidase and a periplasmic-binding-protein-dependent transport system for alpha-glucosides.</title>
        <authorList>
            <person name="Willis L.B."/>
            <person name="Walker G.C."/>
        </authorList>
    </citation>
    <scope>NUCLEOTIDE SEQUENCE [GENOMIC DNA]</scope>
</reference>
<reference key="2">
    <citation type="journal article" date="2001" name="Proc. Natl. Acad. Sci. U.S.A.">
        <title>Analysis of the chromosome sequence of the legume symbiont Sinorhizobium meliloti strain 1021.</title>
        <authorList>
            <person name="Capela D."/>
            <person name="Barloy-Hubler F."/>
            <person name="Gouzy J."/>
            <person name="Bothe G."/>
            <person name="Ampe F."/>
            <person name="Batut J."/>
            <person name="Boistard P."/>
            <person name="Becker A."/>
            <person name="Boutry M."/>
            <person name="Cadieu E."/>
            <person name="Dreano S."/>
            <person name="Gloux S."/>
            <person name="Godrie T."/>
            <person name="Goffeau A."/>
            <person name="Kahn D."/>
            <person name="Kiss E."/>
            <person name="Lelaure V."/>
            <person name="Masuy D."/>
            <person name="Pohl T."/>
            <person name="Portetelle D."/>
            <person name="Puehler A."/>
            <person name="Purnelle B."/>
            <person name="Ramsperger U."/>
            <person name="Renard C."/>
            <person name="Thebault P."/>
            <person name="Vandenbol M."/>
            <person name="Weidner S."/>
            <person name="Galibert F."/>
        </authorList>
    </citation>
    <scope>NUCLEOTIDE SEQUENCE [LARGE SCALE GENOMIC DNA]</scope>
    <source>
        <strain>1021</strain>
    </source>
</reference>
<reference key="3">
    <citation type="journal article" date="2001" name="Science">
        <title>The composite genome of the legume symbiont Sinorhizobium meliloti.</title>
        <authorList>
            <person name="Galibert F."/>
            <person name="Finan T.M."/>
            <person name="Long S.R."/>
            <person name="Puehler A."/>
            <person name="Abola P."/>
            <person name="Ampe F."/>
            <person name="Barloy-Hubler F."/>
            <person name="Barnett M.J."/>
            <person name="Becker A."/>
            <person name="Boistard P."/>
            <person name="Bothe G."/>
            <person name="Boutry M."/>
            <person name="Bowser L."/>
            <person name="Buhrmester J."/>
            <person name="Cadieu E."/>
            <person name="Capela D."/>
            <person name="Chain P."/>
            <person name="Cowie A."/>
            <person name="Davis R.W."/>
            <person name="Dreano S."/>
            <person name="Federspiel N.A."/>
            <person name="Fisher R.F."/>
            <person name="Gloux S."/>
            <person name="Godrie T."/>
            <person name="Goffeau A."/>
            <person name="Golding B."/>
            <person name="Gouzy J."/>
            <person name="Gurjal M."/>
            <person name="Hernandez-Lucas I."/>
            <person name="Hong A."/>
            <person name="Huizar L."/>
            <person name="Hyman R.W."/>
            <person name="Jones T."/>
            <person name="Kahn D."/>
            <person name="Kahn M.L."/>
            <person name="Kalman S."/>
            <person name="Keating D.H."/>
            <person name="Kiss E."/>
            <person name="Komp C."/>
            <person name="Lelaure V."/>
            <person name="Masuy D."/>
            <person name="Palm C."/>
            <person name="Peck M.C."/>
            <person name="Pohl T.M."/>
            <person name="Portetelle D."/>
            <person name="Purnelle B."/>
            <person name="Ramsperger U."/>
            <person name="Surzycki R."/>
            <person name="Thebault P."/>
            <person name="Vandenbol M."/>
            <person name="Vorhoelter F.J."/>
            <person name="Weidner S."/>
            <person name="Wells D.H."/>
            <person name="Wong K."/>
            <person name="Yeh K.-C."/>
            <person name="Batut J."/>
        </authorList>
    </citation>
    <scope>NUCLEOTIDE SEQUENCE [LARGE SCALE GENOMIC DNA]</scope>
    <source>
        <strain>1021</strain>
    </source>
</reference>
<proteinExistence type="inferred from homology"/>
<protein>
    <recommendedName>
        <fullName>6-phosphogluconolactonase</fullName>
        <shortName>6PGL</shortName>
        <ecNumber>3.1.1.31</ecNumber>
    </recommendedName>
</protein>
<feature type="chain" id="PRO_0000090105" description="6-phosphogluconolactonase">
    <location>
        <begin position="1"/>
        <end position="232"/>
    </location>
</feature>
<feature type="sequence conflict" description="In Ref. 1; AAD12044." evidence="1" ref="1">
    <location>
        <begin position="184"/>
        <end position="227"/>
    </location>
</feature>
<organism>
    <name type="scientific">Rhizobium meliloti (strain 1021)</name>
    <name type="common">Ensifer meliloti</name>
    <name type="synonym">Sinorhizobium meliloti</name>
    <dbReference type="NCBI Taxonomy" id="266834"/>
    <lineage>
        <taxon>Bacteria</taxon>
        <taxon>Pseudomonadati</taxon>
        <taxon>Pseudomonadota</taxon>
        <taxon>Alphaproteobacteria</taxon>
        <taxon>Hyphomicrobiales</taxon>
        <taxon>Rhizobiaceae</taxon>
        <taxon>Sinorhizobium/Ensifer group</taxon>
        <taxon>Sinorhizobium</taxon>
    </lineage>
</organism>
<comment type="function">
    <text>Hydrolysis of 6-phosphogluconolactone to 6-phosphogluconate.</text>
</comment>
<comment type="catalytic activity">
    <reaction>
        <text>6-phospho-D-glucono-1,5-lactone + H2O = 6-phospho-D-gluconate + H(+)</text>
        <dbReference type="Rhea" id="RHEA:12556"/>
        <dbReference type="ChEBI" id="CHEBI:15377"/>
        <dbReference type="ChEBI" id="CHEBI:15378"/>
        <dbReference type="ChEBI" id="CHEBI:57955"/>
        <dbReference type="ChEBI" id="CHEBI:58759"/>
        <dbReference type="EC" id="3.1.1.31"/>
    </reaction>
</comment>
<comment type="pathway">
    <text>Carbohydrate degradation; pentose phosphate pathway; D-ribulose 5-phosphate from D-glucose 6-phosphate (oxidative stage): step 2/3.</text>
</comment>
<comment type="similarity">
    <text evidence="1">Belongs to the glucosamine/galactosamine-6-phosphate isomerase family. 6-phosphogluconolactonase subfamily.</text>
</comment>
<comment type="caution">
    <text evidence="1">Seems to have a sequencing error in the C-terminal region when compared to orthologs, but the potentially correct sequence could not be inferred.</text>
</comment>
<dbReference type="EC" id="3.1.1.31"/>
<dbReference type="EMBL" id="AF045609">
    <property type="protein sequence ID" value="AAD12044.1"/>
    <property type="molecule type" value="Genomic_DNA"/>
</dbReference>
<dbReference type="EMBL" id="AL591688">
    <property type="protein sequence ID" value="CAC45275.1"/>
    <property type="molecule type" value="Genomic_DNA"/>
</dbReference>
<dbReference type="RefSeq" id="NP_384809.1">
    <property type="nucleotide sequence ID" value="NC_003047.1"/>
</dbReference>
<dbReference type="RefSeq" id="WP_003527053.1">
    <property type="nucleotide sequence ID" value="NC_003047.1"/>
</dbReference>
<dbReference type="SMR" id="Q9Z3S1"/>
<dbReference type="EnsemblBacteria" id="CAC45275">
    <property type="protein sequence ID" value="CAC45275"/>
    <property type="gene ID" value="SMc03069"/>
</dbReference>
<dbReference type="KEGG" id="sme:SMc03069"/>
<dbReference type="PATRIC" id="fig|266834.11.peg.2079"/>
<dbReference type="eggNOG" id="COG0363">
    <property type="taxonomic scope" value="Bacteria"/>
</dbReference>
<dbReference type="HOGENOM" id="CLU_053947_2_1_5"/>
<dbReference type="OrthoDB" id="9810967at2"/>
<dbReference type="UniPathway" id="UPA00115">
    <property type="reaction ID" value="UER00409"/>
</dbReference>
<dbReference type="Proteomes" id="UP000001976">
    <property type="component" value="Chromosome"/>
</dbReference>
<dbReference type="GO" id="GO:0017057">
    <property type="term" value="F:6-phosphogluconolactonase activity"/>
    <property type="evidence" value="ECO:0007669"/>
    <property type="project" value="UniProtKB-EC"/>
</dbReference>
<dbReference type="GO" id="GO:0005975">
    <property type="term" value="P:carbohydrate metabolic process"/>
    <property type="evidence" value="ECO:0007669"/>
    <property type="project" value="InterPro"/>
</dbReference>
<dbReference type="GO" id="GO:0006098">
    <property type="term" value="P:pentose-phosphate shunt"/>
    <property type="evidence" value="ECO:0007669"/>
    <property type="project" value="UniProtKB-UniPathway"/>
</dbReference>
<dbReference type="CDD" id="cd01400">
    <property type="entry name" value="6PGL"/>
    <property type="match status" value="1"/>
</dbReference>
<dbReference type="Gene3D" id="3.40.50.1360">
    <property type="match status" value="1"/>
</dbReference>
<dbReference type="InterPro" id="IPR005900">
    <property type="entry name" value="6-phosphogluconolactonase_DevB"/>
</dbReference>
<dbReference type="InterPro" id="IPR006148">
    <property type="entry name" value="Glc/Gal-6P_isomerase"/>
</dbReference>
<dbReference type="InterPro" id="IPR037171">
    <property type="entry name" value="NagB/RpiA_transferase-like"/>
</dbReference>
<dbReference type="InterPro" id="IPR039104">
    <property type="entry name" value="PGLS"/>
</dbReference>
<dbReference type="NCBIfam" id="TIGR01198">
    <property type="entry name" value="pgl"/>
    <property type="match status" value="1"/>
</dbReference>
<dbReference type="PANTHER" id="PTHR11054">
    <property type="entry name" value="6-PHOSPHOGLUCONOLACTONASE"/>
    <property type="match status" value="1"/>
</dbReference>
<dbReference type="PANTHER" id="PTHR11054:SF0">
    <property type="entry name" value="6-PHOSPHOGLUCONOLACTONASE"/>
    <property type="match status" value="1"/>
</dbReference>
<dbReference type="Pfam" id="PF01182">
    <property type="entry name" value="Glucosamine_iso"/>
    <property type="match status" value="1"/>
</dbReference>
<dbReference type="SUPFAM" id="SSF100950">
    <property type="entry name" value="NagB/RpiA/CoA transferase-like"/>
    <property type="match status" value="1"/>
</dbReference>
<keyword id="KW-0378">Hydrolase</keyword>
<keyword id="KW-1185">Reference proteome</keyword>
<gene>
    <name type="primary">pgl</name>
    <name type="synonym">devB</name>
    <name type="ordered locus">R00703</name>
    <name type="ORF">SMc03069</name>
</gene>